<accession>Q7MLE6</accession>
<protein>
    <recommendedName>
        <fullName evidence="1">Vitamin B12 import ATP-binding protein BtuD</fullName>
        <ecNumber evidence="1">7.6.2.8</ecNumber>
    </recommendedName>
    <alternativeName>
        <fullName evidence="1">Vitamin B12-transporting ATPase</fullName>
    </alternativeName>
</protein>
<evidence type="ECO:0000255" key="1">
    <source>
        <dbReference type="HAMAP-Rule" id="MF_01005"/>
    </source>
</evidence>
<comment type="function">
    <text evidence="1">Part of the ABC transporter complex BtuCDF involved in vitamin B12 import. Responsible for energy coupling to the transport system.</text>
</comment>
<comment type="catalytic activity">
    <reaction evidence="1">
        <text>an R-cob(III)alamin(out) + ATP + H2O = an R-cob(III)alamin(in) + ADP + phosphate + H(+)</text>
        <dbReference type="Rhea" id="RHEA:17873"/>
        <dbReference type="ChEBI" id="CHEBI:15377"/>
        <dbReference type="ChEBI" id="CHEBI:15378"/>
        <dbReference type="ChEBI" id="CHEBI:30616"/>
        <dbReference type="ChEBI" id="CHEBI:43474"/>
        <dbReference type="ChEBI" id="CHEBI:140785"/>
        <dbReference type="ChEBI" id="CHEBI:456216"/>
        <dbReference type="EC" id="7.6.2.8"/>
    </reaction>
</comment>
<comment type="subunit">
    <text evidence="1">The complex is composed of two ATP-binding proteins (BtuD), two transmembrane proteins (BtuC) and a solute-binding protein (BtuF).</text>
</comment>
<comment type="subcellular location">
    <subcellularLocation>
        <location evidence="1">Cell inner membrane</location>
        <topology evidence="1">Peripheral membrane protein</topology>
    </subcellularLocation>
</comment>
<comment type="similarity">
    <text evidence="1">Belongs to the ABC transporter superfamily. Vitamin B12 importer (TC 3.A.1.13.1) family.</text>
</comment>
<proteinExistence type="inferred from homology"/>
<reference key="1">
    <citation type="journal article" date="2003" name="Genome Res.">
        <title>Comparative genome analysis of Vibrio vulnificus, a marine pathogen.</title>
        <authorList>
            <person name="Chen C.-Y."/>
            <person name="Wu K.-M."/>
            <person name="Chang Y.-C."/>
            <person name="Chang C.-H."/>
            <person name="Tsai H.-C."/>
            <person name="Liao T.-L."/>
            <person name="Liu Y.-M."/>
            <person name="Chen H.-J."/>
            <person name="Shen A.B.-T."/>
            <person name="Li J.-C."/>
            <person name="Su T.-L."/>
            <person name="Shao C.-P."/>
            <person name="Lee C.-T."/>
            <person name="Hor L.-I."/>
            <person name="Tsai S.-F."/>
        </authorList>
    </citation>
    <scope>NUCLEOTIDE SEQUENCE [LARGE SCALE GENOMIC DNA]</scope>
    <source>
        <strain>YJ016</strain>
    </source>
</reference>
<organism>
    <name type="scientific">Vibrio vulnificus (strain YJ016)</name>
    <dbReference type="NCBI Taxonomy" id="196600"/>
    <lineage>
        <taxon>Bacteria</taxon>
        <taxon>Pseudomonadati</taxon>
        <taxon>Pseudomonadota</taxon>
        <taxon>Gammaproteobacteria</taxon>
        <taxon>Vibrionales</taxon>
        <taxon>Vibrionaceae</taxon>
        <taxon>Vibrio</taxon>
    </lineage>
</organism>
<gene>
    <name evidence="1" type="primary">btuD</name>
    <name type="ordered locus">VV1481</name>
</gene>
<keyword id="KW-0067">ATP-binding</keyword>
<keyword id="KW-0997">Cell inner membrane</keyword>
<keyword id="KW-1003">Cell membrane</keyword>
<keyword id="KW-0472">Membrane</keyword>
<keyword id="KW-0547">Nucleotide-binding</keyword>
<keyword id="KW-1278">Translocase</keyword>
<keyword id="KW-0813">Transport</keyword>
<dbReference type="EC" id="7.6.2.8" evidence="1"/>
<dbReference type="EMBL" id="BA000037">
    <property type="protein sequence ID" value="BAC94245.1"/>
    <property type="molecule type" value="Genomic_DNA"/>
</dbReference>
<dbReference type="RefSeq" id="WP_011150120.1">
    <property type="nucleotide sequence ID" value="NC_005139.1"/>
</dbReference>
<dbReference type="SMR" id="Q7MLE6"/>
<dbReference type="STRING" id="672.VV93_v1c13910"/>
<dbReference type="KEGG" id="vvy:VV1481"/>
<dbReference type="PATRIC" id="fig|196600.6.peg.1466"/>
<dbReference type="eggNOG" id="COG4138">
    <property type="taxonomic scope" value="Bacteria"/>
</dbReference>
<dbReference type="HOGENOM" id="CLU_000604_1_11_6"/>
<dbReference type="Proteomes" id="UP000002675">
    <property type="component" value="Chromosome I"/>
</dbReference>
<dbReference type="GO" id="GO:0005886">
    <property type="term" value="C:plasma membrane"/>
    <property type="evidence" value="ECO:0007669"/>
    <property type="project" value="UniProtKB-SubCell"/>
</dbReference>
<dbReference type="GO" id="GO:0015420">
    <property type="term" value="F:ABC-type vitamin B12 transporter activity"/>
    <property type="evidence" value="ECO:0007669"/>
    <property type="project" value="UniProtKB-UniRule"/>
</dbReference>
<dbReference type="GO" id="GO:0005524">
    <property type="term" value="F:ATP binding"/>
    <property type="evidence" value="ECO:0007669"/>
    <property type="project" value="UniProtKB-KW"/>
</dbReference>
<dbReference type="GO" id="GO:0016887">
    <property type="term" value="F:ATP hydrolysis activity"/>
    <property type="evidence" value="ECO:0007669"/>
    <property type="project" value="InterPro"/>
</dbReference>
<dbReference type="CDD" id="cd03214">
    <property type="entry name" value="ABC_Iron-Siderophores_B12_Hemin"/>
    <property type="match status" value="1"/>
</dbReference>
<dbReference type="FunFam" id="3.40.50.300:FF:000462">
    <property type="entry name" value="Vitamin B12 import ATP-binding protein BtuD"/>
    <property type="match status" value="1"/>
</dbReference>
<dbReference type="Gene3D" id="3.40.50.300">
    <property type="entry name" value="P-loop containing nucleotide triphosphate hydrolases"/>
    <property type="match status" value="1"/>
</dbReference>
<dbReference type="HAMAP" id="MF_01005">
    <property type="entry name" value="BtuD"/>
    <property type="match status" value="1"/>
</dbReference>
<dbReference type="InterPro" id="IPR003593">
    <property type="entry name" value="AAA+_ATPase"/>
</dbReference>
<dbReference type="InterPro" id="IPR003439">
    <property type="entry name" value="ABC_transporter-like_ATP-bd"/>
</dbReference>
<dbReference type="InterPro" id="IPR023693">
    <property type="entry name" value="ABC_transptr_BtuD"/>
</dbReference>
<dbReference type="InterPro" id="IPR050153">
    <property type="entry name" value="Metal_Ion_Import_ABC"/>
</dbReference>
<dbReference type="InterPro" id="IPR027417">
    <property type="entry name" value="P-loop_NTPase"/>
</dbReference>
<dbReference type="NCBIfam" id="NF002981">
    <property type="entry name" value="PRK03695.1"/>
    <property type="match status" value="1"/>
</dbReference>
<dbReference type="PANTHER" id="PTHR42734">
    <property type="entry name" value="METAL TRANSPORT SYSTEM ATP-BINDING PROTEIN TM_0124-RELATED"/>
    <property type="match status" value="1"/>
</dbReference>
<dbReference type="PANTHER" id="PTHR42734:SF18">
    <property type="entry name" value="VITAMIN B12 IMPORT ATP-BINDING PROTEIN BTUD"/>
    <property type="match status" value="1"/>
</dbReference>
<dbReference type="Pfam" id="PF00005">
    <property type="entry name" value="ABC_tran"/>
    <property type="match status" value="1"/>
</dbReference>
<dbReference type="SMART" id="SM00382">
    <property type="entry name" value="AAA"/>
    <property type="match status" value="1"/>
</dbReference>
<dbReference type="SUPFAM" id="SSF52540">
    <property type="entry name" value="P-loop containing nucleoside triphosphate hydrolases"/>
    <property type="match status" value="1"/>
</dbReference>
<dbReference type="PROSITE" id="PS50893">
    <property type="entry name" value="ABC_TRANSPORTER_2"/>
    <property type="match status" value="1"/>
</dbReference>
<sequence length="254" mass="27831">MHINHISVGNRLLPLSFQCAAGEKVYVAGPNGSGKSTLLSAIAGTLSSREGVKGEVLINETSLLTLPLAEQAIYRAYLCQQSRPAFNVDVFQMLALSLPAGRHVVEPEVQAAVRRVVELVQLQDKLHRSVQALSGGEWQRVRLAAVCLQVWRSLNPYSQLLILDEPAAPLDVAQAKWLYQLIDEMAAQGLVVIVANHDLNRVYQHADKVLLLNQGVLTAYGSADEVMSVENLQQVFETPVKKVAVDGQPYLIFT</sequence>
<name>BTUD_VIBVY</name>
<feature type="chain" id="PRO_0000091964" description="Vitamin B12 import ATP-binding protein BtuD">
    <location>
        <begin position="1"/>
        <end position="254"/>
    </location>
</feature>
<feature type="domain" description="ABC transporter" evidence="1">
    <location>
        <begin position="1"/>
        <end position="239"/>
    </location>
</feature>
<feature type="binding site" evidence="1">
    <location>
        <begin position="29"/>
        <end position="36"/>
    </location>
    <ligand>
        <name>ATP</name>
        <dbReference type="ChEBI" id="CHEBI:30616"/>
    </ligand>
</feature>